<proteinExistence type="inferred from homology"/>
<comment type="function">
    <text evidence="2">Catalyzes the formation of N(7)-methylguanine at position 46 (m7G46) in tRNA.</text>
</comment>
<comment type="catalytic activity">
    <reaction evidence="2">
        <text>guanosine(46) in tRNA + S-adenosyl-L-methionine = N(7)-methylguanosine(46) in tRNA + S-adenosyl-L-homocysteine</text>
        <dbReference type="Rhea" id="RHEA:42708"/>
        <dbReference type="Rhea" id="RHEA-COMP:10188"/>
        <dbReference type="Rhea" id="RHEA-COMP:10189"/>
        <dbReference type="ChEBI" id="CHEBI:57856"/>
        <dbReference type="ChEBI" id="CHEBI:59789"/>
        <dbReference type="ChEBI" id="CHEBI:74269"/>
        <dbReference type="ChEBI" id="CHEBI:74480"/>
        <dbReference type="EC" id="2.1.1.33"/>
    </reaction>
</comment>
<comment type="pathway">
    <text evidence="2">tRNA modification; N(7)-methylguanine-tRNA biosynthesis.</text>
</comment>
<comment type="similarity">
    <text evidence="2">Belongs to the class I-like SAM-binding methyltransferase superfamily. TrmB family.</text>
</comment>
<comment type="sequence caution" evidence="4">
    <conflict type="erroneous initiation">
        <sequence resource="EMBL-CDS" id="AAG03771"/>
    </conflict>
</comment>
<protein>
    <recommendedName>
        <fullName evidence="2">tRNA (guanine-N(7)-)-methyltransferase</fullName>
        <ecNumber evidence="2">2.1.1.33</ecNumber>
    </recommendedName>
    <alternativeName>
        <fullName evidence="2">tRNA (guanine(46)-N(7))-methyltransferase</fullName>
    </alternativeName>
    <alternativeName>
        <fullName evidence="2">tRNA(m7G46)-methyltransferase</fullName>
    </alternativeName>
</protein>
<evidence type="ECO:0000250" key="1"/>
<evidence type="ECO:0000255" key="2">
    <source>
        <dbReference type="HAMAP-Rule" id="MF_01057"/>
    </source>
</evidence>
<evidence type="ECO:0000256" key="3">
    <source>
        <dbReference type="SAM" id="MobiDB-lite"/>
    </source>
</evidence>
<evidence type="ECO:0000305" key="4"/>
<keyword id="KW-0489">Methyltransferase</keyword>
<keyword id="KW-1185">Reference proteome</keyword>
<keyword id="KW-0949">S-adenosyl-L-methionine</keyword>
<keyword id="KW-0808">Transferase</keyword>
<keyword id="KW-0819">tRNA processing</keyword>
<feature type="chain" id="PRO_0000171376" description="tRNA (guanine-N(7)-)-methyltransferase">
    <location>
        <begin position="1"/>
        <end position="244"/>
    </location>
</feature>
<feature type="region of interest" description="Disordered" evidence="3">
    <location>
        <begin position="1"/>
        <end position="20"/>
    </location>
</feature>
<feature type="compositionally biased region" description="Polar residues" evidence="3">
    <location>
        <begin position="1"/>
        <end position="10"/>
    </location>
</feature>
<feature type="active site" evidence="1">
    <location>
        <position position="149"/>
    </location>
</feature>
<feature type="binding site" evidence="2">
    <location>
        <position position="74"/>
    </location>
    <ligand>
        <name>S-adenosyl-L-methionine</name>
        <dbReference type="ChEBI" id="CHEBI:59789"/>
    </ligand>
</feature>
<feature type="binding site" evidence="2">
    <location>
        <position position="99"/>
    </location>
    <ligand>
        <name>S-adenosyl-L-methionine</name>
        <dbReference type="ChEBI" id="CHEBI:59789"/>
    </ligand>
</feature>
<feature type="binding site" evidence="2">
    <location>
        <position position="126"/>
    </location>
    <ligand>
        <name>S-adenosyl-L-methionine</name>
        <dbReference type="ChEBI" id="CHEBI:59789"/>
    </ligand>
</feature>
<feature type="binding site" evidence="2">
    <location>
        <position position="149"/>
    </location>
    <ligand>
        <name>S-adenosyl-L-methionine</name>
        <dbReference type="ChEBI" id="CHEBI:59789"/>
    </ligand>
</feature>
<feature type="binding site" evidence="2">
    <location>
        <position position="153"/>
    </location>
    <ligand>
        <name>substrate</name>
    </ligand>
</feature>
<feature type="binding site" evidence="2">
    <location>
        <position position="185"/>
    </location>
    <ligand>
        <name>substrate</name>
    </ligand>
</feature>
<feature type="binding site" evidence="2">
    <location>
        <begin position="222"/>
        <end position="225"/>
    </location>
    <ligand>
        <name>substrate</name>
    </ligand>
</feature>
<sequence length="244" mass="27595">MSDTPQSPAQDSLAEHDEARPMRTVKSFVMRAGRMTEGQQRGLDLGWPKFGLELSDEVQDFDAIFGRQAPRTFEIGFGMGHSTLEMAAAAPDIDFIGVEVHKPGVGALLNGLLTQGLGNVRVYSCDALEVLRHCVADASLDRLLLFFPDPWHKKRHHKRRIVQPEFAELVRRKLKVGGVLHMATDWEPYAEHMLDVMSAAPGYRNQAEDGRFVPRPQERPVTKFERRGERLGHGVWDLKFERVD</sequence>
<organism>
    <name type="scientific">Pseudomonas aeruginosa (strain ATCC 15692 / DSM 22644 / CIP 104116 / JCM 14847 / LMG 12228 / 1C / PRS 101 / PAO1)</name>
    <dbReference type="NCBI Taxonomy" id="208964"/>
    <lineage>
        <taxon>Bacteria</taxon>
        <taxon>Pseudomonadati</taxon>
        <taxon>Pseudomonadota</taxon>
        <taxon>Gammaproteobacteria</taxon>
        <taxon>Pseudomonadales</taxon>
        <taxon>Pseudomonadaceae</taxon>
        <taxon>Pseudomonas</taxon>
    </lineage>
</organism>
<reference key="1">
    <citation type="journal article" date="2000" name="Nature">
        <title>Complete genome sequence of Pseudomonas aeruginosa PAO1, an opportunistic pathogen.</title>
        <authorList>
            <person name="Stover C.K."/>
            <person name="Pham X.-Q.T."/>
            <person name="Erwin A.L."/>
            <person name="Mizoguchi S.D."/>
            <person name="Warrener P."/>
            <person name="Hickey M.J."/>
            <person name="Brinkman F.S.L."/>
            <person name="Hufnagle W.O."/>
            <person name="Kowalik D.J."/>
            <person name="Lagrou M."/>
            <person name="Garber R.L."/>
            <person name="Goltry L."/>
            <person name="Tolentino E."/>
            <person name="Westbrock-Wadman S."/>
            <person name="Yuan Y."/>
            <person name="Brody L.L."/>
            <person name="Coulter S.N."/>
            <person name="Folger K.R."/>
            <person name="Kas A."/>
            <person name="Larbig K."/>
            <person name="Lim R.M."/>
            <person name="Smith K.A."/>
            <person name="Spencer D.H."/>
            <person name="Wong G.K.-S."/>
            <person name="Wu Z."/>
            <person name="Paulsen I.T."/>
            <person name="Reizer J."/>
            <person name="Saier M.H. Jr."/>
            <person name="Hancock R.E.W."/>
            <person name="Lory S."/>
            <person name="Olson M.V."/>
        </authorList>
    </citation>
    <scope>NUCLEOTIDE SEQUENCE [LARGE SCALE GENOMIC DNA]</scope>
    <source>
        <strain>ATCC 15692 / DSM 22644 / CIP 104116 / JCM 14847 / LMG 12228 / 1C / PRS 101 / PAO1</strain>
    </source>
</reference>
<name>TRMB_PSEAE</name>
<gene>
    <name evidence="2" type="primary">trmB</name>
    <name type="ordered locus">PA0382</name>
</gene>
<dbReference type="EC" id="2.1.1.33" evidence="2"/>
<dbReference type="EMBL" id="AE004091">
    <property type="protein sequence ID" value="AAG03771.1"/>
    <property type="status" value="ALT_INIT"/>
    <property type="molecule type" value="Genomic_DNA"/>
</dbReference>
<dbReference type="PIR" id="E83596">
    <property type="entry name" value="E83596"/>
</dbReference>
<dbReference type="SMR" id="Q9I6B3"/>
<dbReference type="FunCoup" id="Q9I6B3">
    <property type="interactions" value="410"/>
</dbReference>
<dbReference type="STRING" id="208964.PA0382"/>
<dbReference type="PaxDb" id="208964-PA0382"/>
<dbReference type="DNASU" id="879787"/>
<dbReference type="KEGG" id="pae:PA0382"/>
<dbReference type="PATRIC" id="fig|208964.12.peg.402"/>
<dbReference type="PseudoCAP" id="PA0382"/>
<dbReference type="HOGENOM" id="CLU_050910_0_1_6"/>
<dbReference type="InParanoid" id="Q9I6B3"/>
<dbReference type="OrthoDB" id="9802090at2"/>
<dbReference type="PhylomeDB" id="Q9I6B3"/>
<dbReference type="UniPathway" id="UPA00989"/>
<dbReference type="Proteomes" id="UP000002438">
    <property type="component" value="Chromosome"/>
</dbReference>
<dbReference type="GO" id="GO:0043527">
    <property type="term" value="C:tRNA methyltransferase complex"/>
    <property type="evidence" value="ECO:0000318"/>
    <property type="project" value="GO_Central"/>
</dbReference>
<dbReference type="GO" id="GO:0008176">
    <property type="term" value="F:tRNA (guanine(46)-N7)-methyltransferase activity"/>
    <property type="evidence" value="ECO:0000318"/>
    <property type="project" value="GO_Central"/>
</dbReference>
<dbReference type="GO" id="GO:0036265">
    <property type="term" value="P:RNA (guanine-N7)-methylation"/>
    <property type="evidence" value="ECO:0000318"/>
    <property type="project" value="GO_Central"/>
</dbReference>
<dbReference type="GO" id="GO:0030488">
    <property type="term" value="P:tRNA methylation"/>
    <property type="evidence" value="ECO:0000318"/>
    <property type="project" value="GO_Central"/>
</dbReference>
<dbReference type="CDD" id="cd02440">
    <property type="entry name" value="AdoMet_MTases"/>
    <property type="match status" value="1"/>
</dbReference>
<dbReference type="FunFam" id="3.40.50.150:FF:000024">
    <property type="entry name" value="tRNA (guanine-N(7)-)-methyltransferase"/>
    <property type="match status" value="1"/>
</dbReference>
<dbReference type="Gene3D" id="3.40.50.150">
    <property type="entry name" value="Vaccinia Virus protein VP39"/>
    <property type="match status" value="1"/>
</dbReference>
<dbReference type="HAMAP" id="MF_01057">
    <property type="entry name" value="tRNA_methyltr_TrmB"/>
    <property type="match status" value="1"/>
</dbReference>
<dbReference type="InterPro" id="IPR029063">
    <property type="entry name" value="SAM-dependent_MTases_sf"/>
</dbReference>
<dbReference type="InterPro" id="IPR003358">
    <property type="entry name" value="tRNA_(Gua-N-7)_MeTrfase_Trmb"/>
</dbReference>
<dbReference type="InterPro" id="IPR055361">
    <property type="entry name" value="tRNA_methyltr_TrmB_bact"/>
</dbReference>
<dbReference type="NCBIfam" id="TIGR00091">
    <property type="entry name" value="tRNA (guanosine(46)-N7)-methyltransferase TrmB"/>
    <property type="match status" value="1"/>
</dbReference>
<dbReference type="PANTHER" id="PTHR23417">
    <property type="entry name" value="3-DEOXY-D-MANNO-OCTULOSONIC-ACID TRANSFERASE/TRNA GUANINE-N 7 - -METHYLTRANSFERASE"/>
    <property type="match status" value="1"/>
</dbReference>
<dbReference type="PANTHER" id="PTHR23417:SF14">
    <property type="entry name" value="PENTACOTRIPEPTIDE-REPEAT REGION OF PRORP DOMAIN-CONTAINING PROTEIN"/>
    <property type="match status" value="1"/>
</dbReference>
<dbReference type="Pfam" id="PF02390">
    <property type="entry name" value="Methyltransf_4"/>
    <property type="match status" value="1"/>
</dbReference>
<dbReference type="SUPFAM" id="SSF53335">
    <property type="entry name" value="S-adenosyl-L-methionine-dependent methyltransferases"/>
    <property type="match status" value="1"/>
</dbReference>
<dbReference type="PROSITE" id="PS51625">
    <property type="entry name" value="SAM_MT_TRMB"/>
    <property type="match status" value="1"/>
</dbReference>
<accession>Q9I6B3</accession>